<accession>Q61835</accession>
<gene>
    <name type="primary">Fxyd3</name>
    <name type="synonym">Mat8</name>
    <name type="synonym">Plml</name>
</gene>
<organism>
    <name type="scientific">Mus musculus</name>
    <name type="common">Mouse</name>
    <dbReference type="NCBI Taxonomy" id="10090"/>
    <lineage>
        <taxon>Eukaryota</taxon>
        <taxon>Metazoa</taxon>
        <taxon>Chordata</taxon>
        <taxon>Craniata</taxon>
        <taxon>Vertebrata</taxon>
        <taxon>Euteleostomi</taxon>
        <taxon>Mammalia</taxon>
        <taxon>Eutheria</taxon>
        <taxon>Euarchontoglires</taxon>
        <taxon>Glires</taxon>
        <taxon>Rodentia</taxon>
        <taxon>Myomorpha</taxon>
        <taxon>Muroidea</taxon>
        <taxon>Muridae</taxon>
        <taxon>Murinae</taxon>
        <taxon>Mus</taxon>
        <taxon>Mus</taxon>
    </lineage>
</organism>
<name>FXYD3_MOUSE</name>
<protein>
    <recommendedName>
        <fullName>FXYD domain-containing ion transport regulator 3</fullName>
    </recommendedName>
    <alternativeName>
        <fullName>Chloride conductance inducer protein Mat-8</fullName>
    </alternativeName>
    <alternativeName>
        <fullName>Mammary tumor 8 kDa protein</fullName>
    </alternativeName>
    <alternativeName>
        <fullName>Phospholemman-like</fullName>
    </alternativeName>
    <alternativeName>
        <fullName evidence="6">Sodium/potassium-transporting ATPase subunit FXYD3</fullName>
    </alternativeName>
</protein>
<comment type="function">
    <text evidence="1 4">Associates with and regulates the activity of the sodium/potassium-transporting ATPase (NKA) which transports Na(+) out of the cell and K(+) into the cell (PubMed:15743908). Reduces glutathionylation of the NKA beta-1 subunit ATP1B1, thus reversing glutathionylation-mediated inhibition of ATP1B1 (By similarity). Induces a hyperpolarization-activated chloride current when expressed in Xenopus oocytes (By similarity).</text>
</comment>
<comment type="subunit">
    <text evidence="1 4">Regulatory subunit of the sodium/potassium-transporting ATPase which is composed of a catalytic alpha subunit, a non-catalytic beta subunit and an additional regulatory subunit (PubMed:15743908). Interacts with catalytic alpha subunit ATP1A1 (PubMed:15743908). Also interacts with non-catalytic beta subunit ATP1B1 (PubMed:15743908). Interacts with the ATP1A1-ATP1B1, ATP1A2-ATP1B1 and ATP1A3-ATP1B1 NKA isozymes (By similarity).</text>
</comment>
<comment type="subcellular location">
    <subcellularLocation>
        <location evidence="6">Cell membrane</location>
        <topology evidence="2">Single-pass type I membrane protein</topology>
    </subcellularLocation>
</comment>
<comment type="tissue specificity">
    <text evidence="4 5">Expressed at high levels in heart, skeletal muscle and liver with low levels of expression in breast, brain, lung, stomach and colon (PubMed:7836447). In the gastric gland, mainly expressed in the mucus cells forming the upper part of the gland and is absent from the parietal cells (PubMed:15743908).</text>
</comment>
<comment type="PTM">
    <text evidence="1">Glutathionylated.</text>
</comment>
<comment type="miscellaneous">
    <text>Marker of a cell type preferentially transformed by neu or ras oncoprotein.</text>
</comment>
<comment type="similarity">
    <text evidence="6">Belongs to the FXYD family.</text>
</comment>
<evidence type="ECO:0000250" key="1">
    <source>
        <dbReference type="UniProtKB" id="Q14802"/>
    </source>
</evidence>
<evidence type="ECO:0000255" key="2"/>
<evidence type="ECO:0000256" key="3">
    <source>
        <dbReference type="SAM" id="MobiDB-lite"/>
    </source>
</evidence>
<evidence type="ECO:0000269" key="4">
    <source>
    </source>
</evidence>
<evidence type="ECO:0000269" key="5">
    <source>
    </source>
</evidence>
<evidence type="ECO:0000305" key="6"/>
<dbReference type="EMBL" id="X93038">
    <property type="protein sequence ID" value="CAA63606.1"/>
    <property type="molecule type" value="mRNA"/>
</dbReference>
<dbReference type="EMBL" id="BC002039">
    <property type="protein sequence ID" value="AAH02039.1"/>
    <property type="molecule type" value="mRNA"/>
</dbReference>
<dbReference type="EMBL" id="BC056223">
    <property type="protein sequence ID" value="AAH56223.1"/>
    <property type="molecule type" value="mRNA"/>
</dbReference>
<dbReference type="CCDS" id="CCDS21125.1"/>
<dbReference type="PIR" id="S61552">
    <property type="entry name" value="S61552"/>
</dbReference>
<dbReference type="RefSeq" id="NP_032583.1">
    <property type="nucleotide sequence ID" value="NM_008557.2"/>
</dbReference>
<dbReference type="SMR" id="Q61835"/>
<dbReference type="BioGRID" id="201318">
    <property type="interactions" value="2"/>
</dbReference>
<dbReference type="FunCoup" id="Q61835">
    <property type="interactions" value="62"/>
</dbReference>
<dbReference type="STRING" id="10090.ENSMUSP00000130245"/>
<dbReference type="TCDB" id="1.A.27.1.2">
    <property type="family name" value="the phospholemman (plm) family"/>
</dbReference>
<dbReference type="PhosphoSitePlus" id="Q61835"/>
<dbReference type="PaxDb" id="10090-ENSMUSP00000130245"/>
<dbReference type="ProteomicsDB" id="273395"/>
<dbReference type="DNASU" id="17178"/>
<dbReference type="Ensembl" id="ENSMUST00000167369.8">
    <property type="protein sequence ID" value="ENSMUSP00000130245.2"/>
    <property type="gene ID" value="ENSMUSG00000057092.13"/>
</dbReference>
<dbReference type="GeneID" id="17178"/>
<dbReference type="KEGG" id="mmu:17178"/>
<dbReference type="UCSC" id="uc009gia.2">
    <property type="organism name" value="mouse"/>
</dbReference>
<dbReference type="AGR" id="MGI:107497"/>
<dbReference type="CTD" id="5349"/>
<dbReference type="MGI" id="MGI:107497">
    <property type="gene designation" value="Fxyd3"/>
</dbReference>
<dbReference type="VEuPathDB" id="HostDB:ENSMUSG00000057092"/>
<dbReference type="eggNOG" id="ENOG502S9Z9">
    <property type="taxonomic scope" value="Eukaryota"/>
</dbReference>
<dbReference type="GeneTree" id="ENSGT00940000153062"/>
<dbReference type="InParanoid" id="Q61835"/>
<dbReference type="OMA" id="IVLMSEC"/>
<dbReference type="OrthoDB" id="9888529at2759"/>
<dbReference type="PhylomeDB" id="Q61835"/>
<dbReference type="TreeFam" id="TF333443"/>
<dbReference type="Reactome" id="R-MMU-5578775">
    <property type="pathway name" value="Ion homeostasis"/>
</dbReference>
<dbReference type="Reactome" id="R-MMU-936837">
    <property type="pathway name" value="Ion transport by P-type ATPases"/>
</dbReference>
<dbReference type="BioGRID-ORCS" id="17178">
    <property type="hits" value="2 hits in 78 CRISPR screens"/>
</dbReference>
<dbReference type="ChiTaRS" id="Fxyd3">
    <property type="organism name" value="mouse"/>
</dbReference>
<dbReference type="PRO" id="PR:Q61835"/>
<dbReference type="Proteomes" id="UP000000589">
    <property type="component" value="Chromosome 7"/>
</dbReference>
<dbReference type="RNAct" id="Q61835">
    <property type="molecule type" value="protein"/>
</dbReference>
<dbReference type="Bgee" id="ENSMUSG00000057092">
    <property type="expression patterns" value="Expressed in epithelium of stomach and 151 other cell types or tissues"/>
</dbReference>
<dbReference type="ExpressionAtlas" id="Q61835">
    <property type="expression patterns" value="baseline and differential"/>
</dbReference>
<dbReference type="GO" id="GO:0005789">
    <property type="term" value="C:endoplasmic reticulum membrane"/>
    <property type="evidence" value="ECO:0000314"/>
    <property type="project" value="MGI"/>
</dbReference>
<dbReference type="GO" id="GO:0005886">
    <property type="term" value="C:plasma membrane"/>
    <property type="evidence" value="ECO:0007669"/>
    <property type="project" value="UniProtKB-SubCell"/>
</dbReference>
<dbReference type="GO" id="GO:0051117">
    <property type="term" value="F:ATPase binding"/>
    <property type="evidence" value="ECO:0000353"/>
    <property type="project" value="MGI"/>
</dbReference>
<dbReference type="GO" id="GO:0099106">
    <property type="term" value="F:ion channel regulator activity"/>
    <property type="evidence" value="ECO:0007669"/>
    <property type="project" value="InterPro"/>
</dbReference>
<dbReference type="GO" id="GO:0006813">
    <property type="term" value="P:potassium ion transport"/>
    <property type="evidence" value="ECO:0007669"/>
    <property type="project" value="UniProtKB-KW"/>
</dbReference>
<dbReference type="GO" id="GO:0043269">
    <property type="term" value="P:regulation of monoatomic ion transport"/>
    <property type="evidence" value="ECO:0007669"/>
    <property type="project" value="InterPro"/>
</dbReference>
<dbReference type="GO" id="GO:0006814">
    <property type="term" value="P:sodium ion transport"/>
    <property type="evidence" value="ECO:0007669"/>
    <property type="project" value="UniProtKB-KW"/>
</dbReference>
<dbReference type="CDD" id="cd20328">
    <property type="entry name" value="FXYD3-like"/>
    <property type="match status" value="1"/>
</dbReference>
<dbReference type="FunFam" id="1.20.5.780:FF:000006">
    <property type="entry name" value="FXYD domain-containing ion transport regulator"/>
    <property type="match status" value="1"/>
</dbReference>
<dbReference type="Gene3D" id="1.20.5.780">
    <property type="entry name" value="Single helix bin"/>
    <property type="match status" value="1"/>
</dbReference>
<dbReference type="InterPro" id="IPR047297">
    <property type="entry name" value="FXYD_motif"/>
</dbReference>
<dbReference type="InterPro" id="IPR000272">
    <property type="entry name" value="Ion-transport_regulator_FXYD"/>
</dbReference>
<dbReference type="PANTHER" id="PTHR14132:SF11">
    <property type="entry name" value="FXYD DOMAIN-CONTAINING ION TRANSPORT REGULATOR 3"/>
    <property type="match status" value="1"/>
</dbReference>
<dbReference type="PANTHER" id="PTHR14132">
    <property type="entry name" value="SODIUM/POTASSIUM-TRANSPORTING ATPASE SUBUNIT GAMMA"/>
    <property type="match status" value="1"/>
</dbReference>
<dbReference type="Pfam" id="PF02038">
    <property type="entry name" value="ATP1G1_PLM_MAT8"/>
    <property type="match status" value="1"/>
</dbReference>
<dbReference type="PROSITE" id="PS01310">
    <property type="entry name" value="FXYD"/>
    <property type="match status" value="1"/>
</dbReference>
<keyword id="KW-1003">Cell membrane</keyword>
<keyword id="KW-0318">Glutathionylation</keyword>
<keyword id="KW-0406">Ion transport</keyword>
<keyword id="KW-0472">Membrane</keyword>
<keyword id="KW-0630">Potassium</keyword>
<keyword id="KW-0633">Potassium transport</keyword>
<keyword id="KW-1185">Reference proteome</keyword>
<keyword id="KW-0732">Signal</keyword>
<keyword id="KW-0915">Sodium</keyword>
<keyword id="KW-0739">Sodium transport</keyword>
<keyword id="KW-0740">Sodium/potassium transport</keyword>
<keyword id="KW-0812">Transmembrane</keyword>
<keyword id="KW-1133">Transmembrane helix</keyword>
<keyword id="KW-0813">Transport</keyword>
<sequence>MQEVVLSLLVLLAGLPTLDANDPENKNDPFYYDWYSLRVGGLICAGILCALGIIVLMSGKCKCKFRQKPSHRPGEGPPLITPGSAHNC</sequence>
<proteinExistence type="evidence at protein level"/>
<feature type="chain" id="PRO_0000010363" description="FXYD domain-containing ion transport regulator 3">
    <location>
        <begin position="1"/>
        <end position="88"/>
    </location>
</feature>
<feature type="signal peptide" description="Not cleaved" evidence="4">
    <location>
        <begin position="1"/>
        <end position="20"/>
    </location>
</feature>
<feature type="topological domain" description="Extracellular" evidence="2">
    <location>
        <begin position="1"/>
        <end position="38"/>
    </location>
</feature>
<feature type="transmembrane region" description="Helical" evidence="2">
    <location>
        <begin position="39"/>
        <end position="59"/>
    </location>
</feature>
<feature type="topological domain" description="Cytoplasmic" evidence="2">
    <location>
        <begin position="60"/>
        <end position="88"/>
    </location>
</feature>
<feature type="region of interest" description="Disordered" evidence="3">
    <location>
        <begin position="67"/>
        <end position="88"/>
    </location>
</feature>
<feature type="mutagenesis site" description="Does not lead to glycosylation, suggesting that the non-cleavable signal sequence remains partly or entirely embedded in the membrane." evidence="4">
    <original>V</original>
    <variation>N</variation>
    <location>
        <position position="5"/>
    </location>
</feature>
<reference key="1">
    <citation type="journal article" date="1994" name="Oncogene">
        <title>neu and ras initiate murine mammary tumors that share genetic markers generally absent in c-myc and int-2-initiated tumors.</title>
        <authorList>
            <person name="Morrison B.W."/>
            <person name="Leder P."/>
        </authorList>
    </citation>
    <scope>NUCLEOTIDE SEQUENCE [MRNA]</scope>
    <source>
        <strain>FVB/N</strain>
        <tissue>Mammary gland</tissue>
    </source>
</reference>
<reference key="2">
    <citation type="journal article" date="2004" name="Genome Res.">
        <title>The status, quality, and expansion of the NIH full-length cDNA project: the Mammalian Gene Collection (MGC).</title>
        <authorList>
            <consortium name="The MGC Project Team"/>
        </authorList>
    </citation>
    <scope>NUCLEOTIDE SEQUENCE [LARGE SCALE MRNA]</scope>
    <source>
        <tissue>Mammary tumor</tissue>
    </source>
</reference>
<reference key="3">
    <citation type="journal article" date="1995" name="J. Biol. Chem.">
        <title>Mat-8, a novel phospholemman-like protein expressed in human breast tumors, induces a chloride conductance in Xenopus oocytes.</title>
        <authorList>
            <person name="Morrison B.W."/>
            <person name="Moorman J.R."/>
            <person name="Kowdley G.C."/>
            <person name="Kobayashi Y.M."/>
            <person name="Jones L.R."/>
            <person name="Leder P."/>
        </authorList>
    </citation>
    <scope>TISSUE SPECIFICITY</scope>
</reference>
<reference key="4">
    <citation type="journal article" date="2005" name="Mol. Biol. Cell">
        <title>FXYD3 (Mat-8), a new regulator of Na,K-ATPase.</title>
        <authorList>
            <person name="Crambert G."/>
            <person name="Li C."/>
            <person name="Claeys D."/>
            <person name="Geering K."/>
        </authorList>
    </citation>
    <scope>FUNCTION</scope>
    <scope>IDENTIFICATION IN SODIUM/POTASSIUM-TRANSPORTING ATPASE COMPLEX</scope>
    <scope>INTERACTION WITH ATP1A1 AND ATP1B1</scope>
    <scope>TISSUE SPECIFICITY</scope>
    <scope>NON-CLEAVABLE SIGNAL SEQUENCE</scope>
    <scope>MUTAGENESIS OF VAL-5</scope>
</reference>